<dbReference type="EC" id="3.4.21.-"/>
<dbReference type="EMBL" id="DS989828">
    <property type="protein sequence ID" value="EFR04333.1"/>
    <property type="molecule type" value="Genomic_DNA"/>
</dbReference>
<dbReference type="RefSeq" id="XP_003170096.1">
    <property type="nucleotide sequence ID" value="XM_003170048.1"/>
</dbReference>
<dbReference type="SMR" id="E4V2V9"/>
<dbReference type="STRING" id="535722.E4V2V9"/>
<dbReference type="GlyCosmos" id="E4V2V9">
    <property type="glycosylation" value="2 sites, No reported glycans"/>
</dbReference>
<dbReference type="GeneID" id="10025333"/>
<dbReference type="VEuPathDB" id="FungiDB:MGYG_07342"/>
<dbReference type="eggNOG" id="KOG1153">
    <property type="taxonomic scope" value="Eukaryota"/>
</dbReference>
<dbReference type="HOGENOM" id="CLU_011263_1_3_1"/>
<dbReference type="InParanoid" id="E4V2V9"/>
<dbReference type="OMA" id="CGIDYVT"/>
<dbReference type="OrthoDB" id="206201at2759"/>
<dbReference type="Proteomes" id="UP000002669">
    <property type="component" value="Unassembled WGS sequence"/>
</dbReference>
<dbReference type="GO" id="GO:0005576">
    <property type="term" value="C:extracellular region"/>
    <property type="evidence" value="ECO:0007669"/>
    <property type="project" value="UniProtKB-SubCell"/>
</dbReference>
<dbReference type="GO" id="GO:0004252">
    <property type="term" value="F:serine-type endopeptidase activity"/>
    <property type="evidence" value="ECO:0007669"/>
    <property type="project" value="InterPro"/>
</dbReference>
<dbReference type="GO" id="GO:0006508">
    <property type="term" value="P:proteolysis"/>
    <property type="evidence" value="ECO:0007669"/>
    <property type="project" value="UniProtKB-KW"/>
</dbReference>
<dbReference type="CDD" id="cd04077">
    <property type="entry name" value="Peptidases_S8_PCSK9_ProteinaseK_like"/>
    <property type="match status" value="1"/>
</dbReference>
<dbReference type="FunFam" id="3.40.50.200:FF:000014">
    <property type="entry name" value="Proteinase K"/>
    <property type="match status" value="1"/>
</dbReference>
<dbReference type="Gene3D" id="3.30.70.80">
    <property type="entry name" value="Peptidase S8 propeptide/proteinase inhibitor I9"/>
    <property type="match status" value="1"/>
</dbReference>
<dbReference type="Gene3D" id="3.40.50.200">
    <property type="entry name" value="Peptidase S8/S53 domain"/>
    <property type="match status" value="1"/>
</dbReference>
<dbReference type="InterPro" id="IPR034193">
    <property type="entry name" value="PCSK9_ProteinaseK-like"/>
</dbReference>
<dbReference type="InterPro" id="IPR000209">
    <property type="entry name" value="Peptidase_S8/S53_dom"/>
</dbReference>
<dbReference type="InterPro" id="IPR036852">
    <property type="entry name" value="Peptidase_S8/S53_dom_sf"/>
</dbReference>
<dbReference type="InterPro" id="IPR022398">
    <property type="entry name" value="Peptidase_S8_His-AS"/>
</dbReference>
<dbReference type="InterPro" id="IPR023828">
    <property type="entry name" value="Peptidase_S8_Ser-AS"/>
</dbReference>
<dbReference type="InterPro" id="IPR050131">
    <property type="entry name" value="Peptidase_S8_subtilisin-like"/>
</dbReference>
<dbReference type="InterPro" id="IPR015500">
    <property type="entry name" value="Peptidase_S8_subtilisin-rel"/>
</dbReference>
<dbReference type="InterPro" id="IPR010259">
    <property type="entry name" value="S8pro/Inhibitor_I9"/>
</dbReference>
<dbReference type="InterPro" id="IPR037045">
    <property type="entry name" value="S8pro/Inhibitor_I9_sf"/>
</dbReference>
<dbReference type="PANTHER" id="PTHR43806:SF11">
    <property type="entry name" value="CEREVISIN-RELATED"/>
    <property type="match status" value="1"/>
</dbReference>
<dbReference type="PANTHER" id="PTHR43806">
    <property type="entry name" value="PEPTIDASE S8"/>
    <property type="match status" value="1"/>
</dbReference>
<dbReference type="Pfam" id="PF05922">
    <property type="entry name" value="Inhibitor_I9"/>
    <property type="match status" value="1"/>
</dbReference>
<dbReference type="Pfam" id="PF00082">
    <property type="entry name" value="Peptidase_S8"/>
    <property type="match status" value="1"/>
</dbReference>
<dbReference type="PRINTS" id="PR00723">
    <property type="entry name" value="SUBTILISIN"/>
</dbReference>
<dbReference type="SUPFAM" id="SSF54897">
    <property type="entry name" value="Protease propeptides/inhibitors"/>
    <property type="match status" value="1"/>
</dbReference>
<dbReference type="SUPFAM" id="SSF52743">
    <property type="entry name" value="Subtilisin-like"/>
    <property type="match status" value="1"/>
</dbReference>
<dbReference type="PROSITE" id="PS51892">
    <property type="entry name" value="SUBTILASE"/>
    <property type="match status" value="1"/>
</dbReference>
<dbReference type="PROSITE" id="PS00137">
    <property type="entry name" value="SUBTILASE_HIS"/>
    <property type="match status" value="1"/>
</dbReference>
<dbReference type="PROSITE" id="PS00138">
    <property type="entry name" value="SUBTILASE_SER"/>
    <property type="match status" value="1"/>
</dbReference>
<proteinExistence type="inferred from homology"/>
<reference key="1">
    <citation type="journal article" date="2012" name="MBio">
        <title>Comparative genome analysis of Trichophyton rubrum and related dermatophytes reveals candidate genes involved in infection.</title>
        <authorList>
            <person name="Martinez D.A."/>
            <person name="Oliver B.G."/>
            <person name="Graeser Y."/>
            <person name="Goldberg J.M."/>
            <person name="Li W."/>
            <person name="Martinez-Rossi N.M."/>
            <person name="Monod M."/>
            <person name="Shelest E."/>
            <person name="Barton R.C."/>
            <person name="Birch E."/>
            <person name="Brakhage A.A."/>
            <person name="Chen Z."/>
            <person name="Gurr S.J."/>
            <person name="Heiman D."/>
            <person name="Heitman J."/>
            <person name="Kosti I."/>
            <person name="Rossi A."/>
            <person name="Saif S."/>
            <person name="Samalova M."/>
            <person name="Saunders C.W."/>
            <person name="Shea T."/>
            <person name="Summerbell R.C."/>
            <person name="Xu J."/>
            <person name="Young S."/>
            <person name="Zeng Q."/>
            <person name="Birren B.W."/>
            <person name="Cuomo C.A."/>
            <person name="White T.C."/>
        </authorList>
    </citation>
    <scope>NUCLEOTIDE SEQUENCE [LARGE SCALE GENOMIC DNA]</scope>
    <source>
        <strain>ATCC MYA-4604 / CBS 118893</strain>
    </source>
</reference>
<protein>
    <recommendedName>
        <fullName>Subtilisin-like protease 7</fullName>
        <ecNumber>3.4.21.-</ecNumber>
    </recommendedName>
</protein>
<keyword id="KW-0325">Glycoprotein</keyword>
<keyword id="KW-0378">Hydrolase</keyword>
<keyword id="KW-0645">Protease</keyword>
<keyword id="KW-1185">Reference proteome</keyword>
<keyword id="KW-0964">Secreted</keyword>
<keyword id="KW-0720">Serine protease</keyword>
<keyword id="KW-0732">Signal</keyword>
<keyword id="KW-0843">Virulence</keyword>
<keyword id="KW-0865">Zymogen</keyword>
<sequence length="400" mass="41354">MGFITKAIPLALAAASVINGAEILETRAGVQTLADKYIVVMNDGMTDKDFDSHRSWVNRTHRRRLVRRGAKAMTGMKHTYRFPTGMKGYSGHFDEQMINEIAKRADVKYIERDARVQINAIEMQDNVPSWGLARVGSKEPGGTTYYYDSSAGQGVTAYVIDTGTDIKHEEFSGRATWGGNFVDDIDMDCNGHGTHVSGTVAGTKFGVAKKANVVGVKVLDCDGSGSNSGVIMGMEFATNDAKKKGAGKAVANMSLGGAFSQASNDAAAAIAQGGVFLAVAAGNDNVDAAMASPASEPSICTVAASTEQDGKASFSNYGQVVDVYAPGDGITSAKPGGGSQVLSGTSMASPHVAGLAAYLIGTGKSGGPQLCDTIKNMAIDVITNPGAGTTGKLINNGSGK</sequence>
<name>SUB7_ARTGP</name>
<accession>E4V2V9</accession>
<feature type="signal peptide" evidence="2">
    <location>
        <begin position="1"/>
        <end position="20"/>
    </location>
</feature>
<feature type="propeptide" id="PRO_0000406376" evidence="1">
    <location>
        <begin position="21"/>
        <end position="119"/>
    </location>
</feature>
<feature type="chain" id="PRO_0000406377" description="Subtilisin-like protease 7">
    <location>
        <begin position="120"/>
        <end position="400"/>
    </location>
</feature>
<feature type="domain" description="Inhibitor I9" evidence="2">
    <location>
        <begin position="36"/>
        <end position="118"/>
    </location>
</feature>
<feature type="domain" description="Peptidase S8" evidence="3">
    <location>
        <begin position="129"/>
        <end position="400"/>
    </location>
</feature>
<feature type="active site" description="Charge relay system" evidence="3">
    <location>
        <position position="161"/>
    </location>
</feature>
<feature type="active site" description="Charge relay system" evidence="3">
    <location>
        <position position="192"/>
    </location>
</feature>
<feature type="active site" description="Charge relay system" evidence="3">
    <location>
        <position position="346"/>
    </location>
</feature>
<feature type="glycosylation site" description="N-linked (GlcNAc...) asparagine" evidence="2">
    <location>
        <position position="252"/>
    </location>
</feature>
<feature type="glycosylation site" description="N-linked (GlcNAc...) asparagine" evidence="2">
    <location>
        <position position="396"/>
    </location>
</feature>
<gene>
    <name type="primary">SUB7</name>
    <name type="ORF">MGYG_07342</name>
</gene>
<comment type="function">
    <text evidence="1">Secreted subtilisin-like serine protease with keratinolytic activity that contributes to pathogenicity.</text>
</comment>
<comment type="subcellular location">
    <subcellularLocation>
        <location evidence="1">Secreted</location>
    </subcellularLocation>
</comment>
<comment type="similarity">
    <text evidence="4">Belongs to the peptidase S8 family.</text>
</comment>
<evidence type="ECO:0000250" key="1"/>
<evidence type="ECO:0000255" key="2"/>
<evidence type="ECO:0000255" key="3">
    <source>
        <dbReference type="PROSITE-ProRule" id="PRU01240"/>
    </source>
</evidence>
<evidence type="ECO:0000305" key="4"/>
<organism>
    <name type="scientific">Arthroderma gypseum (strain ATCC MYA-4604 / CBS 118893)</name>
    <name type="common">Microsporum gypseum</name>
    <dbReference type="NCBI Taxonomy" id="535722"/>
    <lineage>
        <taxon>Eukaryota</taxon>
        <taxon>Fungi</taxon>
        <taxon>Dikarya</taxon>
        <taxon>Ascomycota</taxon>
        <taxon>Pezizomycotina</taxon>
        <taxon>Eurotiomycetes</taxon>
        <taxon>Eurotiomycetidae</taxon>
        <taxon>Onygenales</taxon>
        <taxon>Arthrodermataceae</taxon>
        <taxon>Nannizzia</taxon>
    </lineage>
</organism>